<keyword id="KW-0274">FAD</keyword>
<keyword id="KW-0285">Flavoprotein</keyword>
<keyword id="KW-0560">Oxidoreductase</keyword>
<keyword id="KW-1185">Reference proteome</keyword>
<dbReference type="EC" id="1.4.99.-" evidence="1"/>
<dbReference type="EMBL" id="CP000394">
    <property type="protein sequence ID" value="ABI61400.1"/>
    <property type="molecule type" value="Genomic_DNA"/>
</dbReference>
<dbReference type="RefSeq" id="WP_011631210.1">
    <property type="nucleotide sequence ID" value="NC_008343.2"/>
</dbReference>
<dbReference type="SMR" id="Q0BUV2"/>
<dbReference type="STRING" id="391165.GbCGDNIH1_0502"/>
<dbReference type="KEGG" id="gbe:GbCGDNIH1_0502"/>
<dbReference type="eggNOG" id="COG0665">
    <property type="taxonomic scope" value="Bacteria"/>
</dbReference>
<dbReference type="HOGENOM" id="CLU_007884_9_2_5"/>
<dbReference type="OrthoDB" id="9805337at2"/>
<dbReference type="UniPathway" id="UPA00043">
    <property type="reaction ID" value="UER00498"/>
</dbReference>
<dbReference type="Proteomes" id="UP000001963">
    <property type="component" value="Chromosome"/>
</dbReference>
<dbReference type="GO" id="GO:0005737">
    <property type="term" value="C:cytoplasm"/>
    <property type="evidence" value="ECO:0007669"/>
    <property type="project" value="TreeGrafter"/>
</dbReference>
<dbReference type="GO" id="GO:0005886">
    <property type="term" value="C:plasma membrane"/>
    <property type="evidence" value="ECO:0007669"/>
    <property type="project" value="TreeGrafter"/>
</dbReference>
<dbReference type="GO" id="GO:0008718">
    <property type="term" value="F:D-amino-acid dehydrogenase activity"/>
    <property type="evidence" value="ECO:0007669"/>
    <property type="project" value="UniProtKB-UniRule"/>
</dbReference>
<dbReference type="GO" id="GO:0055130">
    <property type="term" value="P:D-alanine catabolic process"/>
    <property type="evidence" value="ECO:0007669"/>
    <property type="project" value="UniProtKB-UniPathway"/>
</dbReference>
<dbReference type="FunFam" id="3.50.50.60:FF:000020">
    <property type="entry name" value="D-amino acid dehydrogenase"/>
    <property type="match status" value="1"/>
</dbReference>
<dbReference type="Gene3D" id="3.30.9.10">
    <property type="entry name" value="D-Amino Acid Oxidase, subunit A, domain 2"/>
    <property type="match status" value="1"/>
</dbReference>
<dbReference type="Gene3D" id="3.50.50.60">
    <property type="entry name" value="FAD/NAD(P)-binding domain"/>
    <property type="match status" value="2"/>
</dbReference>
<dbReference type="HAMAP" id="MF_01202">
    <property type="entry name" value="DadA"/>
    <property type="match status" value="1"/>
</dbReference>
<dbReference type="InterPro" id="IPR023080">
    <property type="entry name" value="DadA"/>
</dbReference>
<dbReference type="InterPro" id="IPR006076">
    <property type="entry name" value="FAD-dep_OxRdtase"/>
</dbReference>
<dbReference type="InterPro" id="IPR036188">
    <property type="entry name" value="FAD/NAD-bd_sf"/>
</dbReference>
<dbReference type="NCBIfam" id="NF001933">
    <property type="entry name" value="PRK00711.1"/>
    <property type="match status" value="1"/>
</dbReference>
<dbReference type="PANTHER" id="PTHR13847:SF280">
    <property type="entry name" value="D-AMINO ACID DEHYDROGENASE"/>
    <property type="match status" value="1"/>
</dbReference>
<dbReference type="PANTHER" id="PTHR13847">
    <property type="entry name" value="SARCOSINE DEHYDROGENASE-RELATED"/>
    <property type="match status" value="1"/>
</dbReference>
<dbReference type="Pfam" id="PF01266">
    <property type="entry name" value="DAO"/>
    <property type="match status" value="1"/>
</dbReference>
<dbReference type="SUPFAM" id="SSF54373">
    <property type="entry name" value="FAD-linked reductases, C-terminal domain"/>
    <property type="match status" value="1"/>
</dbReference>
<dbReference type="SUPFAM" id="SSF51905">
    <property type="entry name" value="FAD/NAD(P)-binding domain"/>
    <property type="match status" value="1"/>
</dbReference>
<organism>
    <name type="scientific">Granulibacter bethesdensis (strain ATCC BAA-1260 / CGDNIH1)</name>
    <dbReference type="NCBI Taxonomy" id="391165"/>
    <lineage>
        <taxon>Bacteria</taxon>
        <taxon>Pseudomonadati</taxon>
        <taxon>Pseudomonadota</taxon>
        <taxon>Alphaproteobacteria</taxon>
        <taxon>Acetobacterales</taxon>
        <taxon>Acetobacteraceae</taxon>
        <taxon>Granulibacter</taxon>
    </lineage>
</organism>
<evidence type="ECO:0000255" key="1">
    <source>
        <dbReference type="HAMAP-Rule" id="MF_01202"/>
    </source>
</evidence>
<accession>Q0BUV2</accession>
<protein>
    <recommendedName>
        <fullName evidence="1">D-amino acid dehydrogenase</fullName>
        <ecNumber evidence="1">1.4.99.-</ecNumber>
    </recommendedName>
</protein>
<reference key="1">
    <citation type="journal article" date="2007" name="J. Bacteriol.">
        <title>Genome sequence analysis of the emerging human pathogenic acetic acid bacterium Granulibacter bethesdensis.</title>
        <authorList>
            <person name="Greenberg D.E."/>
            <person name="Porcella S.F."/>
            <person name="Zelazny A.M."/>
            <person name="Virtaneva K."/>
            <person name="Sturdevant D.E."/>
            <person name="Kupko J.J. III"/>
            <person name="Barbian K.D."/>
            <person name="Babar A."/>
            <person name="Dorward D.W."/>
            <person name="Holland S.M."/>
        </authorList>
    </citation>
    <scope>NUCLEOTIDE SEQUENCE [LARGE SCALE GENOMIC DNA]</scope>
    <source>
        <strain>ATCC BAA-1260 / CGDNIH1</strain>
    </source>
</reference>
<feature type="chain" id="PRO_1000066096" description="D-amino acid dehydrogenase">
    <location>
        <begin position="1"/>
        <end position="418"/>
    </location>
</feature>
<feature type="binding site" evidence="1">
    <location>
        <begin position="3"/>
        <end position="17"/>
    </location>
    <ligand>
        <name>FAD</name>
        <dbReference type="ChEBI" id="CHEBI:57692"/>
    </ligand>
</feature>
<gene>
    <name evidence="1" type="primary">dadA</name>
    <name type="ordered locus">GbCGDNIH1_0502</name>
</gene>
<sequence length="418" mass="45968">MRVLILGSGVVGVATAYYLSREGHEVVVADRRDGPGMETSFANAGQVSPGYSSPWAAPGIPLKVLRWMTQPRSPFVLRPKLDWAQWRWMTQMLGNCTANAYARNKARMVRLAEYSRDQLRDLRDETGIAYDNRERGTLQLFRTQKQMDHTADDIAVLKSYGVAYEVLDRAGCIAAEPGLQWAQVPLVGGLRLPGDETGDAHLFTRELARICMERGVSFLFGTQIHGFSTQGDKITAIRSSRGDLMADAYVCALGSYSPLLLKQIGIAAPIYPVKGYSMTIPITDETHAPVSTVMDETYKIAITRLGNRIRVGGTAELAGYDTRLRQERRMTLEGSVKELFPDSGDLPAATFWSGLRPMTPDGTPIIGPTRYRNLHLNTGHGTLGWTMSCGSGRLLADMISGKRPNIDHADLAIARYAG</sequence>
<comment type="function">
    <text evidence="1">Oxidative deamination of D-amino acids.</text>
</comment>
<comment type="catalytic activity">
    <reaction evidence="1">
        <text>a D-alpha-amino acid + A + H2O = a 2-oxocarboxylate + AH2 + NH4(+)</text>
        <dbReference type="Rhea" id="RHEA:18125"/>
        <dbReference type="ChEBI" id="CHEBI:13193"/>
        <dbReference type="ChEBI" id="CHEBI:15377"/>
        <dbReference type="ChEBI" id="CHEBI:17499"/>
        <dbReference type="ChEBI" id="CHEBI:28938"/>
        <dbReference type="ChEBI" id="CHEBI:35179"/>
        <dbReference type="ChEBI" id="CHEBI:59871"/>
    </reaction>
</comment>
<comment type="cofactor">
    <cofactor evidence="1">
        <name>FAD</name>
        <dbReference type="ChEBI" id="CHEBI:57692"/>
    </cofactor>
</comment>
<comment type="pathway">
    <text>Amino-acid degradation; D-alanine degradation; NH(3) and pyruvate from D-alanine: step 1/1.</text>
</comment>
<comment type="similarity">
    <text evidence="1">Belongs to the DadA oxidoreductase family.</text>
</comment>
<name>DADA_GRABC</name>
<proteinExistence type="inferred from homology"/>